<comment type="function">
    <text evidence="1">Part of the twin-arginine translocation (Tat) system that transports large folded proteins containing a characteristic twin-arginine motif in their signal peptide across membranes. Together with TatC, TatB is part of a receptor directly interacting with Tat signal peptides. TatB may form an oligomeric binding site that transiently accommodates folded Tat precursor proteins before their translocation.</text>
</comment>
<comment type="subunit">
    <text evidence="1">The Tat system comprises two distinct complexes: a TatABC complex, containing multiple copies of TatA, TatB and TatC subunits, and a separate TatA complex, containing only TatA subunits. Substrates initially bind to the TatABC complex, which probably triggers association of the separate TatA complex to form the active translocon.</text>
</comment>
<comment type="subcellular location">
    <subcellularLocation>
        <location evidence="1">Cell inner membrane</location>
        <topology evidence="1">Single-pass membrane protein</topology>
    </subcellularLocation>
</comment>
<comment type="similarity">
    <text evidence="1">Belongs to the TatB family.</text>
</comment>
<evidence type="ECO:0000255" key="1">
    <source>
        <dbReference type="HAMAP-Rule" id="MF_00237"/>
    </source>
</evidence>
<evidence type="ECO:0000256" key="2">
    <source>
        <dbReference type="SAM" id="MobiDB-lite"/>
    </source>
</evidence>
<name>TATB_CERS4</name>
<keyword id="KW-0997">Cell inner membrane</keyword>
<keyword id="KW-1003">Cell membrane</keyword>
<keyword id="KW-0472">Membrane</keyword>
<keyword id="KW-0653">Protein transport</keyword>
<keyword id="KW-1185">Reference proteome</keyword>
<keyword id="KW-0811">Translocation</keyword>
<keyword id="KW-0812">Transmembrane</keyword>
<keyword id="KW-1133">Transmembrane helix</keyword>
<keyword id="KW-0813">Transport</keyword>
<dbReference type="EMBL" id="CP000143">
    <property type="protein sequence ID" value="ABA78699.1"/>
    <property type="molecule type" value="Genomic_DNA"/>
</dbReference>
<dbReference type="RefSeq" id="WP_002719691.1">
    <property type="nucleotide sequence ID" value="NZ_CP030271.1"/>
</dbReference>
<dbReference type="RefSeq" id="YP_352600.1">
    <property type="nucleotide sequence ID" value="NC_007493.2"/>
</dbReference>
<dbReference type="SMR" id="Q3J3D5"/>
<dbReference type="STRING" id="272943.RSP_6059"/>
<dbReference type="EnsemblBacteria" id="ABA78699">
    <property type="protein sequence ID" value="ABA78699"/>
    <property type="gene ID" value="RSP_6059"/>
</dbReference>
<dbReference type="GeneID" id="67446294"/>
<dbReference type="KEGG" id="rsp:RSP_6059"/>
<dbReference type="PATRIC" id="fig|272943.9.peg.1460"/>
<dbReference type="eggNOG" id="COG1826">
    <property type="taxonomic scope" value="Bacteria"/>
</dbReference>
<dbReference type="OrthoDB" id="7206969at2"/>
<dbReference type="Proteomes" id="UP000002703">
    <property type="component" value="Chromosome 1"/>
</dbReference>
<dbReference type="GO" id="GO:0033281">
    <property type="term" value="C:TAT protein transport complex"/>
    <property type="evidence" value="ECO:0007669"/>
    <property type="project" value="UniProtKB-UniRule"/>
</dbReference>
<dbReference type="GO" id="GO:0008320">
    <property type="term" value="F:protein transmembrane transporter activity"/>
    <property type="evidence" value="ECO:0007669"/>
    <property type="project" value="UniProtKB-UniRule"/>
</dbReference>
<dbReference type="GO" id="GO:0043953">
    <property type="term" value="P:protein transport by the Tat complex"/>
    <property type="evidence" value="ECO:0007669"/>
    <property type="project" value="UniProtKB-UniRule"/>
</dbReference>
<dbReference type="Gene3D" id="1.20.5.3310">
    <property type="match status" value="1"/>
</dbReference>
<dbReference type="HAMAP" id="MF_00237">
    <property type="entry name" value="TatB"/>
    <property type="match status" value="1"/>
</dbReference>
<dbReference type="InterPro" id="IPR003369">
    <property type="entry name" value="TatA/B/E"/>
</dbReference>
<dbReference type="InterPro" id="IPR018448">
    <property type="entry name" value="TatB"/>
</dbReference>
<dbReference type="NCBIfam" id="TIGR01410">
    <property type="entry name" value="tatB"/>
    <property type="match status" value="1"/>
</dbReference>
<dbReference type="PANTHER" id="PTHR33162">
    <property type="entry name" value="SEC-INDEPENDENT PROTEIN TRANSLOCASE PROTEIN TATA, CHLOROPLASTIC"/>
    <property type="match status" value="1"/>
</dbReference>
<dbReference type="PANTHER" id="PTHR33162:SF1">
    <property type="entry name" value="SEC-INDEPENDENT PROTEIN TRANSLOCASE PROTEIN TATA, CHLOROPLASTIC"/>
    <property type="match status" value="1"/>
</dbReference>
<dbReference type="Pfam" id="PF02416">
    <property type="entry name" value="TatA_B_E"/>
    <property type="match status" value="1"/>
</dbReference>
<dbReference type="PRINTS" id="PR01506">
    <property type="entry name" value="TATBPROTEIN"/>
</dbReference>
<sequence>MFDIGWSELLVIGVVALVVVGPKDLPEMFRTLGRVTAKARNMAREFQRAMEAAADETGVKDVVKDVKNVTSPRSMGLDAMKQAADRFEKWDPMKPQQGAPKPAAPASSIPAAKAQQGAGAAAVTAPPASEPAAPVPQAPAAAAPEAASPAPAEPKSNA</sequence>
<protein>
    <recommendedName>
        <fullName evidence="1">Sec-independent protein translocase protein TatB</fullName>
    </recommendedName>
</protein>
<organism>
    <name type="scientific">Cereibacter sphaeroides (strain ATCC 17023 / DSM 158 / JCM 6121 / CCUG 31486 / LMG 2827 / NBRC 12203 / NCIMB 8253 / ATH 2.4.1.)</name>
    <name type="common">Rhodobacter sphaeroides</name>
    <dbReference type="NCBI Taxonomy" id="272943"/>
    <lineage>
        <taxon>Bacteria</taxon>
        <taxon>Pseudomonadati</taxon>
        <taxon>Pseudomonadota</taxon>
        <taxon>Alphaproteobacteria</taxon>
        <taxon>Rhodobacterales</taxon>
        <taxon>Paracoccaceae</taxon>
        <taxon>Cereibacter</taxon>
    </lineage>
</organism>
<gene>
    <name evidence="1" type="primary">tatB</name>
    <name type="ordered locus">RHOS4_11310</name>
    <name type="ORF">RSP_6059</name>
</gene>
<feature type="chain" id="PRO_0000301221" description="Sec-independent protein translocase protein TatB">
    <location>
        <begin position="1"/>
        <end position="158"/>
    </location>
</feature>
<feature type="transmembrane region" description="Helical" evidence="1">
    <location>
        <begin position="1"/>
        <end position="21"/>
    </location>
</feature>
<feature type="region of interest" description="Disordered" evidence="2">
    <location>
        <begin position="73"/>
        <end position="158"/>
    </location>
</feature>
<feature type="compositionally biased region" description="Basic and acidic residues" evidence="2">
    <location>
        <begin position="83"/>
        <end position="92"/>
    </location>
</feature>
<feature type="compositionally biased region" description="Low complexity" evidence="2">
    <location>
        <begin position="94"/>
        <end position="132"/>
    </location>
</feature>
<feature type="compositionally biased region" description="Low complexity" evidence="2">
    <location>
        <begin position="138"/>
        <end position="158"/>
    </location>
</feature>
<proteinExistence type="inferred from homology"/>
<accession>Q3J3D5</accession>
<reference key="1">
    <citation type="submission" date="2005-09" db="EMBL/GenBank/DDBJ databases">
        <title>Complete sequence of chromosome 1 of Rhodobacter sphaeroides 2.4.1.</title>
        <authorList>
            <person name="Copeland A."/>
            <person name="Lucas S."/>
            <person name="Lapidus A."/>
            <person name="Barry K."/>
            <person name="Detter J.C."/>
            <person name="Glavina T."/>
            <person name="Hammon N."/>
            <person name="Israni S."/>
            <person name="Pitluck S."/>
            <person name="Richardson P."/>
            <person name="Mackenzie C."/>
            <person name="Choudhary M."/>
            <person name="Larimer F."/>
            <person name="Hauser L.J."/>
            <person name="Land M."/>
            <person name="Donohue T.J."/>
            <person name="Kaplan S."/>
        </authorList>
    </citation>
    <scope>NUCLEOTIDE SEQUENCE [LARGE SCALE GENOMIC DNA]</scope>
    <source>
        <strain>ATCC 17023 / DSM 158 / JCM 6121 / CCUG 31486 / LMG 2827 / NBRC 12203 / NCIMB 8253 / ATH 2.4.1.</strain>
    </source>
</reference>